<comment type="function">
    <text evidence="1">Regulates the transcription of several operons and genes involved in the biogenesis of Fe-S clusters and Fe-S-containing proteins.</text>
</comment>
<comment type="cofactor">
    <cofactor evidence="1">
        <name>[2Fe-2S] cluster</name>
        <dbReference type="ChEBI" id="CHEBI:190135"/>
    </cofactor>
    <text evidence="1">Binds 1 [2Fe-2S] cluster.</text>
</comment>
<feature type="chain" id="PRO_1000138107" description="HTH-type transcriptional regulator IscR">
    <location>
        <begin position="1"/>
        <end position="164"/>
    </location>
</feature>
<feature type="domain" description="HTH rrf2-type" evidence="1">
    <location>
        <begin position="2"/>
        <end position="131"/>
    </location>
</feature>
<feature type="DNA-binding region" description="H-T-H motif" evidence="1">
    <location>
        <begin position="28"/>
        <end position="51"/>
    </location>
</feature>
<feature type="binding site" evidence="1">
    <location>
        <position position="92"/>
    </location>
    <ligand>
        <name>[2Fe-2S] cluster</name>
        <dbReference type="ChEBI" id="CHEBI:190135"/>
    </ligand>
</feature>
<feature type="binding site" evidence="1">
    <location>
        <position position="98"/>
    </location>
    <ligand>
        <name>[2Fe-2S] cluster</name>
        <dbReference type="ChEBI" id="CHEBI:190135"/>
    </ligand>
</feature>
<feature type="binding site" evidence="1">
    <location>
        <position position="104"/>
    </location>
    <ligand>
        <name>[2Fe-2S] cluster</name>
        <dbReference type="ChEBI" id="CHEBI:190135"/>
    </ligand>
</feature>
<organism>
    <name type="scientific">Salmonella gallinarum (strain 287/91 / NCTC 13346)</name>
    <dbReference type="NCBI Taxonomy" id="550538"/>
    <lineage>
        <taxon>Bacteria</taxon>
        <taxon>Pseudomonadati</taxon>
        <taxon>Pseudomonadota</taxon>
        <taxon>Gammaproteobacteria</taxon>
        <taxon>Enterobacterales</taxon>
        <taxon>Enterobacteriaceae</taxon>
        <taxon>Salmonella</taxon>
    </lineage>
</organism>
<evidence type="ECO:0000255" key="1">
    <source>
        <dbReference type="HAMAP-Rule" id="MF_01176"/>
    </source>
</evidence>
<protein>
    <recommendedName>
        <fullName evidence="1">HTH-type transcriptional regulator IscR</fullName>
    </recommendedName>
</protein>
<accession>B5RD13</accession>
<reference key="1">
    <citation type="journal article" date="2008" name="Genome Res.">
        <title>Comparative genome analysis of Salmonella enteritidis PT4 and Salmonella gallinarum 287/91 provides insights into evolutionary and host adaptation pathways.</title>
        <authorList>
            <person name="Thomson N.R."/>
            <person name="Clayton D.J."/>
            <person name="Windhorst D."/>
            <person name="Vernikos G."/>
            <person name="Davidson S."/>
            <person name="Churcher C."/>
            <person name="Quail M.A."/>
            <person name="Stevens M."/>
            <person name="Jones M.A."/>
            <person name="Watson M."/>
            <person name="Barron A."/>
            <person name="Layton A."/>
            <person name="Pickard D."/>
            <person name="Kingsley R.A."/>
            <person name="Bignell A."/>
            <person name="Clark L."/>
            <person name="Harris B."/>
            <person name="Ormond D."/>
            <person name="Abdellah Z."/>
            <person name="Brooks K."/>
            <person name="Cherevach I."/>
            <person name="Chillingworth T."/>
            <person name="Woodward J."/>
            <person name="Norberczak H."/>
            <person name="Lord A."/>
            <person name="Arrowsmith C."/>
            <person name="Jagels K."/>
            <person name="Moule S."/>
            <person name="Mungall K."/>
            <person name="Saunders M."/>
            <person name="Whitehead S."/>
            <person name="Chabalgoity J.A."/>
            <person name="Maskell D."/>
            <person name="Humphreys T."/>
            <person name="Roberts M."/>
            <person name="Barrow P.A."/>
            <person name="Dougan G."/>
            <person name="Parkhill J."/>
        </authorList>
    </citation>
    <scope>NUCLEOTIDE SEQUENCE [LARGE SCALE GENOMIC DNA]</scope>
    <source>
        <strain>287/91 / NCTC 13346</strain>
    </source>
</reference>
<gene>
    <name evidence="1" type="primary">iscR</name>
    <name type="ordered locus">SG2579</name>
</gene>
<proteinExistence type="inferred from homology"/>
<sequence length="164" mass="17391">MRLTSKGRYAVTAMLDVALNSEAGPVPLADISERQGISLSYLEQLFSRLRKNGLVSSVRGPGGGYLLGKDAGSIAVGEVISAVDESVDATRCQGKGGCQGGDKCLTHALWRDLSDRLTGFLNNITLGELVNNQEVLDVSGRQHTHDAPRASGRAQDAIDVKLRA</sequence>
<keyword id="KW-0001">2Fe-2S</keyword>
<keyword id="KW-0010">Activator</keyword>
<keyword id="KW-0238">DNA-binding</keyword>
<keyword id="KW-0408">Iron</keyword>
<keyword id="KW-0411">Iron-sulfur</keyword>
<keyword id="KW-0479">Metal-binding</keyword>
<keyword id="KW-0678">Repressor</keyword>
<keyword id="KW-0804">Transcription</keyword>
<keyword id="KW-0805">Transcription regulation</keyword>
<dbReference type="EMBL" id="AM933173">
    <property type="protein sequence ID" value="CAR38399.1"/>
    <property type="molecule type" value="Genomic_DNA"/>
</dbReference>
<dbReference type="RefSeq" id="WP_001241346.1">
    <property type="nucleotide sequence ID" value="NC_011274.1"/>
</dbReference>
<dbReference type="SMR" id="B5RD13"/>
<dbReference type="KEGG" id="seg:SG2579"/>
<dbReference type="HOGENOM" id="CLU_107144_0_0_6"/>
<dbReference type="Proteomes" id="UP000008321">
    <property type="component" value="Chromosome"/>
</dbReference>
<dbReference type="GO" id="GO:0005829">
    <property type="term" value="C:cytosol"/>
    <property type="evidence" value="ECO:0007669"/>
    <property type="project" value="TreeGrafter"/>
</dbReference>
<dbReference type="GO" id="GO:0051537">
    <property type="term" value="F:2 iron, 2 sulfur cluster binding"/>
    <property type="evidence" value="ECO:0007669"/>
    <property type="project" value="UniProtKB-KW"/>
</dbReference>
<dbReference type="GO" id="GO:0003700">
    <property type="term" value="F:DNA-binding transcription factor activity"/>
    <property type="evidence" value="ECO:0007669"/>
    <property type="project" value="UniProtKB-UniRule"/>
</dbReference>
<dbReference type="GO" id="GO:0003690">
    <property type="term" value="F:double-stranded DNA binding"/>
    <property type="evidence" value="ECO:0007669"/>
    <property type="project" value="UniProtKB-UniRule"/>
</dbReference>
<dbReference type="GO" id="GO:0005506">
    <property type="term" value="F:iron ion binding"/>
    <property type="evidence" value="ECO:0007669"/>
    <property type="project" value="UniProtKB-UniRule"/>
</dbReference>
<dbReference type="FunFam" id="1.10.10.10:FF:000026">
    <property type="entry name" value="HTH-type transcriptional regulator IscR"/>
    <property type="match status" value="1"/>
</dbReference>
<dbReference type="Gene3D" id="1.10.10.10">
    <property type="entry name" value="Winged helix-like DNA-binding domain superfamily/Winged helix DNA-binding domain"/>
    <property type="match status" value="1"/>
</dbReference>
<dbReference type="HAMAP" id="MF_01176">
    <property type="entry name" value="HTH_type_IscR"/>
    <property type="match status" value="1"/>
</dbReference>
<dbReference type="InterPro" id="IPR010242">
    <property type="entry name" value="TF_HTH_IscR"/>
</dbReference>
<dbReference type="InterPro" id="IPR030489">
    <property type="entry name" value="TR_Rrf2-type_CS"/>
</dbReference>
<dbReference type="InterPro" id="IPR000944">
    <property type="entry name" value="Tscrpt_reg_Rrf2"/>
</dbReference>
<dbReference type="InterPro" id="IPR036388">
    <property type="entry name" value="WH-like_DNA-bd_sf"/>
</dbReference>
<dbReference type="InterPro" id="IPR036390">
    <property type="entry name" value="WH_DNA-bd_sf"/>
</dbReference>
<dbReference type="NCBIfam" id="TIGR02010">
    <property type="entry name" value="IscR"/>
    <property type="match status" value="1"/>
</dbReference>
<dbReference type="NCBIfam" id="NF008110">
    <property type="entry name" value="PRK10857.1"/>
    <property type="match status" value="1"/>
</dbReference>
<dbReference type="NCBIfam" id="TIGR00738">
    <property type="entry name" value="rrf2_super"/>
    <property type="match status" value="1"/>
</dbReference>
<dbReference type="PANTHER" id="PTHR33221:SF5">
    <property type="entry name" value="HTH-TYPE TRANSCRIPTIONAL REGULATOR ISCR"/>
    <property type="match status" value="1"/>
</dbReference>
<dbReference type="PANTHER" id="PTHR33221">
    <property type="entry name" value="WINGED HELIX-TURN-HELIX TRANSCRIPTIONAL REGULATOR, RRF2 FAMILY"/>
    <property type="match status" value="1"/>
</dbReference>
<dbReference type="Pfam" id="PF02082">
    <property type="entry name" value="Rrf2"/>
    <property type="match status" value="1"/>
</dbReference>
<dbReference type="SUPFAM" id="SSF46785">
    <property type="entry name" value="Winged helix' DNA-binding domain"/>
    <property type="match status" value="1"/>
</dbReference>
<dbReference type="PROSITE" id="PS01332">
    <property type="entry name" value="HTH_RRF2_1"/>
    <property type="match status" value="1"/>
</dbReference>
<dbReference type="PROSITE" id="PS51197">
    <property type="entry name" value="HTH_RRF2_2"/>
    <property type="match status" value="1"/>
</dbReference>
<name>ISCR_SALG2</name>